<accession>B1J2P7</accession>
<reference key="1">
    <citation type="submission" date="2008-02" db="EMBL/GenBank/DDBJ databases">
        <title>Complete sequence of Pseudomonas putida W619.</title>
        <authorList>
            <person name="Copeland A."/>
            <person name="Lucas S."/>
            <person name="Lapidus A."/>
            <person name="Barry K."/>
            <person name="Detter J.C."/>
            <person name="Glavina del Rio T."/>
            <person name="Dalin E."/>
            <person name="Tice H."/>
            <person name="Pitluck S."/>
            <person name="Chain P."/>
            <person name="Malfatti S."/>
            <person name="Shin M."/>
            <person name="Vergez L."/>
            <person name="Schmutz J."/>
            <person name="Larimer F."/>
            <person name="Land M."/>
            <person name="Hauser L."/>
            <person name="Kyrpides N."/>
            <person name="Kim E."/>
            <person name="Taghavi S."/>
            <person name="Vangronsveld D."/>
            <person name="van der Lelie D."/>
            <person name="Richardson P."/>
        </authorList>
    </citation>
    <scope>NUCLEOTIDE SEQUENCE [LARGE SCALE GENOMIC DNA]</scope>
    <source>
        <strain>W619</strain>
    </source>
</reference>
<evidence type="ECO:0000255" key="1">
    <source>
        <dbReference type="HAMAP-Rule" id="MF_01855"/>
    </source>
</evidence>
<sequence length="336" mass="37174">MSRVTLSRYLIEQTRSNNTPADLRFLIEVVARACKEISHHVSKGALGGVLGSMGTENVQGEVQKKLDVISNDILLEANEWGGHLAGMASEEMDNAYQIPGRYPKGAYLLVFDPLDGSSNIDVNVSVGTIFSVLRCPNEYLSQNETLNENAFLQPGTEQVAAGYAIYGPQTMLILTLGNGVKGFTLDRELGSFVLTHENIQVPATTAEFAINMSNQRHWEAPVQRYVGELLAGETGPLKKNYNMRWIASMVADVHRILTRGGLFMYPRDAREPSKPGKLRLMYEANPMSFIIEQAGGASTNGYERILDIKPESLHQRVSVILGSKEEVERVTAYHKE</sequence>
<proteinExistence type="inferred from homology"/>
<name>F16PA_PSEPW</name>
<comment type="catalytic activity">
    <reaction evidence="1">
        <text>beta-D-fructose 1,6-bisphosphate + H2O = beta-D-fructose 6-phosphate + phosphate</text>
        <dbReference type="Rhea" id="RHEA:11064"/>
        <dbReference type="ChEBI" id="CHEBI:15377"/>
        <dbReference type="ChEBI" id="CHEBI:32966"/>
        <dbReference type="ChEBI" id="CHEBI:43474"/>
        <dbReference type="ChEBI" id="CHEBI:57634"/>
        <dbReference type="EC" id="3.1.3.11"/>
    </reaction>
</comment>
<comment type="cofactor">
    <cofactor evidence="1">
        <name>Mg(2+)</name>
        <dbReference type="ChEBI" id="CHEBI:18420"/>
    </cofactor>
    <text evidence="1">Binds 2 magnesium ions per subunit.</text>
</comment>
<comment type="pathway">
    <text evidence="1">Carbohydrate biosynthesis; gluconeogenesis.</text>
</comment>
<comment type="subunit">
    <text evidence="1">Homotetramer.</text>
</comment>
<comment type="subcellular location">
    <subcellularLocation>
        <location evidence="1">Cytoplasm</location>
    </subcellularLocation>
</comment>
<comment type="similarity">
    <text evidence="1">Belongs to the FBPase class 1 family.</text>
</comment>
<keyword id="KW-0119">Carbohydrate metabolism</keyword>
<keyword id="KW-0963">Cytoplasm</keyword>
<keyword id="KW-0378">Hydrolase</keyword>
<keyword id="KW-0460">Magnesium</keyword>
<keyword id="KW-0479">Metal-binding</keyword>
<feature type="chain" id="PRO_0000364651" description="Fructose-1,6-bisphosphatase class 1">
    <location>
        <begin position="1"/>
        <end position="336"/>
    </location>
</feature>
<feature type="binding site" evidence="1">
    <location>
        <position position="90"/>
    </location>
    <ligand>
        <name>Mg(2+)</name>
        <dbReference type="ChEBI" id="CHEBI:18420"/>
        <label>1</label>
    </ligand>
</feature>
<feature type="binding site" evidence="1">
    <location>
        <position position="112"/>
    </location>
    <ligand>
        <name>Mg(2+)</name>
        <dbReference type="ChEBI" id="CHEBI:18420"/>
        <label>1</label>
    </ligand>
</feature>
<feature type="binding site" evidence="1">
    <location>
        <position position="112"/>
    </location>
    <ligand>
        <name>Mg(2+)</name>
        <dbReference type="ChEBI" id="CHEBI:18420"/>
        <label>2</label>
    </ligand>
</feature>
<feature type="binding site" evidence="1">
    <location>
        <position position="114"/>
    </location>
    <ligand>
        <name>Mg(2+)</name>
        <dbReference type="ChEBI" id="CHEBI:18420"/>
        <label>1</label>
    </ligand>
</feature>
<feature type="binding site" evidence="1">
    <location>
        <begin position="115"/>
        <end position="118"/>
    </location>
    <ligand>
        <name>substrate</name>
    </ligand>
</feature>
<feature type="binding site" evidence="1">
    <location>
        <position position="115"/>
    </location>
    <ligand>
        <name>Mg(2+)</name>
        <dbReference type="ChEBI" id="CHEBI:18420"/>
        <label>2</label>
    </ligand>
</feature>
<feature type="binding site" evidence="1">
    <location>
        <position position="211"/>
    </location>
    <ligand>
        <name>substrate</name>
    </ligand>
</feature>
<feature type="binding site" evidence="1">
    <location>
        <position position="277"/>
    </location>
    <ligand>
        <name>substrate</name>
    </ligand>
</feature>
<feature type="binding site" evidence="1">
    <location>
        <position position="283"/>
    </location>
    <ligand>
        <name>Mg(2+)</name>
        <dbReference type="ChEBI" id="CHEBI:18420"/>
        <label>2</label>
    </ligand>
</feature>
<protein>
    <recommendedName>
        <fullName evidence="1">Fructose-1,6-bisphosphatase class 1</fullName>
        <shortName evidence="1">FBPase class 1</shortName>
        <ecNumber evidence="1">3.1.3.11</ecNumber>
    </recommendedName>
    <alternativeName>
        <fullName evidence="1">D-fructose-1,6-bisphosphate 1-phosphohydrolase class 1</fullName>
    </alternativeName>
</protein>
<gene>
    <name evidence="1" type="primary">fbp</name>
    <name type="ordered locus">PputW619_0423</name>
</gene>
<dbReference type="EC" id="3.1.3.11" evidence="1"/>
<dbReference type="EMBL" id="CP000949">
    <property type="protein sequence ID" value="ACA70928.1"/>
    <property type="molecule type" value="Genomic_DNA"/>
</dbReference>
<dbReference type="SMR" id="B1J2P7"/>
<dbReference type="STRING" id="390235.PputW619_0423"/>
<dbReference type="KEGG" id="ppw:PputW619_0423"/>
<dbReference type="eggNOG" id="COG0158">
    <property type="taxonomic scope" value="Bacteria"/>
</dbReference>
<dbReference type="HOGENOM" id="CLU_039977_0_0_6"/>
<dbReference type="OrthoDB" id="9806756at2"/>
<dbReference type="UniPathway" id="UPA00138"/>
<dbReference type="GO" id="GO:0005829">
    <property type="term" value="C:cytosol"/>
    <property type="evidence" value="ECO:0007669"/>
    <property type="project" value="TreeGrafter"/>
</dbReference>
<dbReference type="GO" id="GO:0042132">
    <property type="term" value="F:fructose 1,6-bisphosphate 1-phosphatase activity"/>
    <property type="evidence" value="ECO:0007669"/>
    <property type="project" value="UniProtKB-UniRule"/>
</dbReference>
<dbReference type="GO" id="GO:0000287">
    <property type="term" value="F:magnesium ion binding"/>
    <property type="evidence" value="ECO:0007669"/>
    <property type="project" value="UniProtKB-UniRule"/>
</dbReference>
<dbReference type="GO" id="GO:0030388">
    <property type="term" value="P:fructose 1,6-bisphosphate metabolic process"/>
    <property type="evidence" value="ECO:0007669"/>
    <property type="project" value="TreeGrafter"/>
</dbReference>
<dbReference type="GO" id="GO:0006002">
    <property type="term" value="P:fructose 6-phosphate metabolic process"/>
    <property type="evidence" value="ECO:0007669"/>
    <property type="project" value="TreeGrafter"/>
</dbReference>
<dbReference type="GO" id="GO:0006000">
    <property type="term" value="P:fructose metabolic process"/>
    <property type="evidence" value="ECO:0007669"/>
    <property type="project" value="TreeGrafter"/>
</dbReference>
<dbReference type="GO" id="GO:0006094">
    <property type="term" value="P:gluconeogenesis"/>
    <property type="evidence" value="ECO:0007669"/>
    <property type="project" value="UniProtKB-UniRule"/>
</dbReference>
<dbReference type="GO" id="GO:0005986">
    <property type="term" value="P:sucrose biosynthetic process"/>
    <property type="evidence" value="ECO:0007669"/>
    <property type="project" value="TreeGrafter"/>
</dbReference>
<dbReference type="CDD" id="cd00354">
    <property type="entry name" value="FBPase"/>
    <property type="match status" value="1"/>
</dbReference>
<dbReference type="FunFam" id="3.30.540.10:FF:000006">
    <property type="entry name" value="Fructose-1,6-bisphosphatase class 1"/>
    <property type="match status" value="1"/>
</dbReference>
<dbReference type="FunFam" id="3.40.190.80:FF:000011">
    <property type="entry name" value="Fructose-1,6-bisphosphatase class 1"/>
    <property type="match status" value="1"/>
</dbReference>
<dbReference type="Gene3D" id="3.40.190.80">
    <property type="match status" value="1"/>
</dbReference>
<dbReference type="Gene3D" id="3.30.540.10">
    <property type="entry name" value="Fructose-1,6-Bisphosphatase, subunit A, domain 1"/>
    <property type="match status" value="1"/>
</dbReference>
<dbReference type="HAMAP" id="MF_01855">
    <property type="entry name" value="FBPase_class1"/>
    <property type="match status" value="1"/>
</dbReference>
<dbReference type="InterPro" id="IPR044015">
    <property type="entry name" value="FBPase_C_dom"/>
</dbReference>
<dbReference type="InterPro" id="IPR000146">
    <property type="entry name" value="FBPase_class-1"/>
</dbReference>
<dbReference type="InterPro" id="IPR033391">
    <property type="entry name" value="FBPase_N"/>
</dbReference>
<dbReference type="InterPro" id="IPR028343">
    <property type="entry name" value="FBPtase"/>
</dbReference>
<dbReference type="NCBIfam" id="NF006778">
    <property type="entry name" value="PRK09293.1-1"/>
    <property type="match status" value="1"/>
</dbReference>
<dbReference type="NCBIfam" id="NF006779">
    <property type="entry name" value="PRK09293.1-3"/>
    <property type="match status" value="1"/>
</dbReference>
<dbReference type="NCBIfam" id="NF006780">
    <property type="entry name" value="PRK09293.1-4"/>
    <property type="match status" value="1"/>
</dbReference>
<dbReference type="PANTHER" id="PTHR11556">
    <property type="entry name" value="FRUCTOSE-1,6-BISPHOSPHATASE-RELATED"/>
    <property type="match status" value="1"/>
</dbReference>
<dbReference type="PANTHER" id="PTHR11556:SF35">
    <property type="entry name" value="SEDOHEPTULOSE-1,7-BISPHOSPHATASE, CHLOROPLASTIC"/>
    <property type="match status" value="1"/>
</dbReference>
<dbReference type="Pfam" id="PF00316">
    <property type="entry name" value="FBPase"/>
    <property type="match status" value="1"/>
</dbReference>
<dbReference type="Pfam" id="PF18913">
    <property type="entry name" value="FBPase_C"/>
    <property type="match status" value="1"/>
</dbReference>
<dbReference type="PIRSF" id="PIRSF500210">
    <property type="entry name" value="FBPtase"/>
    <property type="match status" value="1"/>
</dbReference>
<dbReference type="PIRSF" id="PIRSF000904">
    <property type="entry name" value="FBPtase_SBPase"/>
    <property type="match status" value="1"/>
</dbReference>
<dbReference type="PRINTS" id="PR00115">
    <property type="entry name" value="F16BPHPHTASE"/>
</dbReference>
<dbReference type="SUPFAM" id="SSF56655">
    <property type="entry name" value="Carbohydrate phosphatase"/>
    <property type="match status" value="1"/>
</dbReference>
<organism>
    <name type="scientific">Pseudomonas putida (strain W619)</name>
    <dbReference type="NCBI Taxonomy" id="390235"/>
    <lineage>
        <taxon>Bacteria</taxon>
        <taxon>Pseudomonadati</taxon>
        <taxon>Pseudomonadota</taxon>
        <taxon>Gammaproteobacteria</taxon>
        <taxon>Pseudomonadales</taxon>
        <taxon>Pseudomonadaceae</taxon>
        <taxon>Pseudomonas</taxon>
    </lineage>
</organism>